<dbReference type="EMBL" id="AF522084">
    <property type="protein sequence ID" value="AAM82076.1"/>
    <property type="molecule type" value="Genomic_DNA"/>
</dbReference>
<dbReference type="GO" id="GO:0009507">
    <property type="term" value="C:chloroplast"/>
    <property type="evidence" value="ECO:0007669"/>
    <property type="project" value="UniProtKB-SubCell"/>
</dbReference>
<dbReference type="GO" id="GO:0003723">
    <property type="term" value="F:RNA binding"/>
    <property type="evidence" value="ECO:0007669"/>
    <property type="project" value="UniProtKB-KW"/>
</dbReference>
<dbReference type="GO" id="GO:0006397">
    <property type="term" value="P:mRNA processing"/>
    <property type="evidence" value="ECO:0007669"/>
    <property type="project" value="UniProtKB-KW"/>
</dbReference>
<dbReference type="GO" id="GO:0008380">
    <property type="term" value="P:RNA splicing"/>
    <property type="evidence" value="ECO:0007669"/>
    <property type="project" value="UniProtKB-UniRule"/>
</dbReference>
<dbReference type="GO" id="GO:0008033">
    <property type="term" value="P:tRNA processing"/>
    <property type="evidence" value="ECO:0007669"/>
    <property type="project" value="UniProtKB-KW"/>
</dbReference>
<dbReference type="HAMAP" id="MF_01390">
    <property type="entry name" value="MatK"/>
    <property type="match status" value="1"/>
</dbReference>
<dbReference type="InterPro" id="IPR024937">
    <property type="entry name" value="Domain_X"/>
</dbReference>
<dbReference type="InterPro" id="IPR002866">
    <property type="entry name" value="Maturase_MatK"/>
</dbReference>
<dbReference type="InterPro" id="IPR024942">
    <property type="entry name" value="Maturase_MatK_N"/>
</dbReference>
<dbReference type="PANTHER" id="PTHR34811">
    <property type="entry name" value="MATURASE K"/>
    <property type="match status" value="1"/>
</dbReference>
<dbReference type="PANTHER" id="PTHR34811:SF1">
    <property type="entry name" value="MATURASE K"/>
    <property type="match status" value="1"/>
</dbReference>
<dbReference type="Pfam" id="PF01348">
    <property type="entry name" value="Intron_maturas2"/>
    <property type="match status" value="1"/>
</dbReference>
<dbReference type="Pfam" id="PF01824">
    <property type="entry name" value="MatK_N"/>
    <property type="match status" value="1"/>
</dbReference>
<accession>Q8MCS1</accession>
<comment type="function">
    <text evidence="1">Usually encoded in the trnK tRNA gene intron. Probably assists in splicing its own and other chloroplast group II introns.</text>
</comment>
<comment type="subcellular location">
    <subcellularLocation>
        <location>Plastid</location>
        <location>Chloroplast</location>
    </subcellularLocation>
</comment>
<comment type="similarity">
    <text evidence="1">Belongs to the intron maturase 2 family. MatK subfamily.</text>
</comment>
<proteinExistence type="inferred from homology"/>
<evidence type="ECO:0000255" key="1">
    <source>
        <dbReference type="HAMAP-Rule" id="MF_01390"/>
    </source>
</evidence>
<sequence length="506" mass="60709">MKEYPVYLEQARSRQQDFLYPLLFREYIYGLAYSHNWNRSIFLENGGYDNKYSLLIVKRLITRMYQQNHLIISANDSTKNPFGGYNKNLDSQIISEGFAIVVEIPFLLQLSSSLEEGEILQSYQNLRSIHSIFPFLEDKLTYLNYVADIRIPYPIHLEILVQILRYWVKDVPFFHLLRLFLYHFCNRNSFITTKKSISTFSKSNPRLFLFLYNFYVCEYEYFFVFLRTQSSHLRFQYFSVFFERIFFDAKREHLVKVFSKDFSYTLTLFKDPNIHYVRYQGKCILTSKNAPFLMNKWKHYFIHLWQCFFDIWSQPRMININPLSEHSFQLLGYFLNVRLNRSVVRSQMLQNTFLIEIVIQKLDIIVPILPLIRSLANAKFCNIVGEPISKPVWADSSDFDIIDRFLRICRNLSHYYNGSSKKKSLYRIKYILRLSCIKTLACKHKSTVRAFLKRSGSEELLQEFFTEEEEILSLIFPRDSSTLQRLHRNRIWYLDIIFSNDLVHDE</sequence>
<keyword id="KW-0150">Chloroplast</keyword>
<keyword id="KW-0507">mRNA processing</keyword>
<keyword id="KW-0934">Plastid</keyword>
<keyword id="KW-0694">RNA-binding</keyword>
<keyword id="KW-0819">tRNA processing</keyword>
<geneLocation type="chloroplast"/>
<name>MATK_LATAP</name>
<reference key="1">
    <citation type="book" date="2003" name="Advances in legume systematics - part 10">
        <title>Phylogenetic analyses of tribes Trifolieae and Vicieae based on sequences of the plastid gene matK (Papilionoideae: Leguminosae).</title>
        <editorList>
            <person name="Klitgaard B.B."/>
            <person name="Bruneau A."/>
        </editorList>
        <authorList>
            <person name="Steele K.P."/>
            <person name="Wojciechowski M.F."/>
        </authorList>
    </citation>
    <scope>NUCLEOTIDE SEQUENCE [GENOMIC DNA]</scope>
</reference>
<protein>
    <recommendedName>
        <fullName evidence="1">Maturase K</fullName>
    </recommendedName>
    <alternativeName>
        <fullName evidence="1">Intron maturase</fullName>
    </alternativeName>
</protein>
<organism>
    <name type="scientific">Lathyrus aphaca</name>
    <name type="common">Yellow vetchling</name>
    <dbReference type="NCBI Taxonomy" id="3854"/>
    <lineage>
        <taxon>Eukaryota</taxon>
        <taxon>Viridiplantae</taxon>
        <taxon>Streptophyta</taxon>
        <taxon>Embryophyta</taxon>
        <taxon>Tracheophyta</taxon>
        <taxon>Spermatophyta</taxon>
        <taxon>Magnoliopsida</taxon>
        <taxon>eudicotyledons</taxon>
        <taxon>Gunneridae</taxon>
        <taxon>Pentapetalae</taxon>
        <taxon>rosids</taxon>
        <taxon>fabids</taxon>
        <taxon>Fabales</taxon>
        <taxon>Fabaceae</taxon>
        <taxon>Papilionoideae</taxon>
        <taxon>50 kb inversion clade</taxon>
        <taxon>NPAAA clade</taxon>
        <taxon>Hologalegina</taxon>
        <taxon>IRL clade</taxon>
        <taxon>Fabeae</taxon>
        <taxon>Lathyrus</taxon>
    </lineage>
</organism>
<feature type="chain" id="PRO_0000143458" description="Maturase K">
    <location>
        <begin position="1"/>
        <end position="506"/>
    </location>
</feature>
<gene>
    <name evidence="1" type="primary">matK</name>
</gene>